<sequence length="805" mass="91997">MRYEFSAIEKKWQAIWQENGTFKTGESTEKPKYYVLDMFPYPSGSGLHVGHLEGYTASDIIARFKRSRGFNVLHPMGWDAFGLPAEQYAIKTGTHPKITTENNIRSFRETLQAMGFSYDWSKEINTTDPAYFKWTQWIFLRLYEMGLAYMSDVDVNWCEELKTVLANEEVDEKIADGYTVVRKPLRQWVLKITAYAERLLADLDELEWPENVKQMQRNWIGRSEGVEIDFELRCHGKNLRVYTTRPDTLFGATYLVVSPEHPLAEKLATADNLKEVKAYISRAKLKTELERTGLQKDKTGVFTGSYAINPATGNPLPVWISDFVLISYGTGAIMSVPAHDSRDWEFAKKFDLPIIEVIKSPHDVNDAVFEGKESVPVNSSNSEITIDGLPFREAFDTMASWLEKKGAGKRTINYKLRDWIFSRQRYWGEPIPIKHYEDGTLRTETILPLTLPDVEAYQPSETGESPLATIHDWLYGSDEFGSFRRETNTMPQWAGSCWYYLRFIDPENSGRLIDPEREKYWMNVDLYIGGAEHAVLHLLYARFWHKVLFDLNVVSTVEPFRKLFNQGMILGEDNEKMSKSRGNVIPADHVLKTYGADAVRLYEMFLGPLEQVKPWNTNGIEGISRFLGKVWRLVYPEQEGNKAELTDETMPEELLRRLHKTIRKVTEDTEALKFNTAIAEMMVLVNELQRNGCRNRTAVESMILLLAPYAPHIAEELWQATGHTGSISNEPFPNYVAGLATDSVVQIAVQVNGKLRGTFSTPAGTPQNSLIETARNVESVMKFLEGKAIMREIVVPDKLVNFAVK</sequence>
<comment type="catalytic activity">
    <reaction evidence="1">
        <text>tRNA(Leu) + L-leucine + ATP = L-leucyl-tRNA(Leu) + AMP + diphosphate</text>
        <dbReference type="Rhea" id="RHEA:11688"/>
        <dbReference type="Rhea" id="RHEA-COMP:9613"/>
        <dbReference type="Rhea" id="RHEA-COMP:9622"/>
        <dbReference type="ChEBI" id="CHEBI:30616"/>
        <dbReference type="ChEBI" id="CHEBI:33019"/>
        <dbReference type="ChEBI" id="CHEBI:57427"/>
        <dbReference type="ChEBI" id="CHEBI:78442"/>
        <dbReference type="ChEBI" id="CHEBI:78494"/>
        <dbReference type="ChEBI" id="CHEBI:456215"/>
        <dbReference type="EC" id="6.1.1.4"/>
    </reaction>
</comment>
<comment type="subcellular location">
    <subcellularLocation>
        <location evidence="1">Cytoplasm</location>
    </subcellularLocation>
</comment>
<comment type="similarity">
    <text evidence="1">Belongs to the class-I aminoacyl-tRNA synthetase family.</text>
</comment>
<evidence type="ECO:0000255" key="1">
    <source>
        <dbReference type="HAMAP-Rule" id="MF_00049"/>
    </source>
</evidence>
<accession>B3EH05</accession>
<proteinExistence type="inferred from homology"/>
<reference key="1">
    <citation type="submission" date="2008-05" db="EMBL/GenBank/DDBJ databases">
        <title>Complete sequence of Chlorobium limicola DSM 245.</title>
        <authorList>
            <consortium name="US DOE Joint Genome Institute"/>
            <person name="Lucas S."/>
            <person name="Copeland A."/>
            <person name="Lapidus A."/>
            <person name="Glavina del Rio T."/>
            <person name="Dalin E."/>
            <person name="Tice H."/>
            <person name="Bruce D."/>
            <person name="Goodwin L."/>
            <person name="Pitluck S."/>
            <person name="Schmutz J."/>
            <person name="Larimer F."/>
            <person name="Land M."/>
            <person name="Hauser L."/>
            <person name="Kyrpides N."/>
            <person name="Ovchinnikova G."/>
            <person name="Zhao F."/>
            <person name="Li T."/>
            <person name="Liu Z."/>
            <person name="Overmann J."/>
            <person name="Bryant D.A."/>
            <person name="Richardson P."/>
        </authorList>
    </citation>
    <scope>NUCLEOTIDE SEQUENCE [LARGE SCALE GENOMIC DNA]</scope>
    <source>
        <strain>DSM 245 / NBRC 103803 / 6330</strain>
    </source>
</reference>
<gene>
    <name evidence="1" type="primary">leuS</name>
    <name type="ordered locus">Clim_0598</name>
</gene>
<dbReference type="EC" id="6.1.1.4" evidence="1"/>
<dbReference type="EMBL" id="CP001097">
    <property type="protein sequence ID" value="ACD89685.1"/>
    <property type="molecule type" value="Genomic_DNA"/>
</dbReference>
<dbReference type="RefSeq" id="WP_012465566.1">
    <property type="nucleotide sequence ID" value="NC_010803.1"/>
</dbReference>
<dbReference type="SMR" id="B3EH05"/>
<dbReference type="STRING" id="290315.Clim_0598"/>
<dbReference type="KEGG" id="cli:Clim_0598"/>
<dbReference type="eggNOG" id="COG0495">
    <property type="taxonomic scope" value="Bacteria"/>
</dbReference>
<dbReference type="HOGENOM" id="CLU_004427_0_0_10"/>
<dbReference type="OrthoDB" id="9810365at2"/>
<dbReference type="Proteomes" id="UP000008841">
    <property type="component" value="Chromosome"/>
</dbReference>
<dbReference type="GO" id="GO:0005829">
    <property type="term" value="C:cytosol"/>
    <property type="evidence" value="ECO:0007669"/>
    <property type="project" value="TreeGrafter"/>
</dbReference>
<dbReference type="GO" id="GO:0002161">
    <property type="term" value="F:aminoacyl-tRNA deacylase activity"/>
    <property type="evidence" value="ECO:0007669"/>
    <property type="project" value="InterPro"/>
</dbReference>
<dbReference type="GO" id="GO:0005524">
    <property type="term" value="F:ATP binding"/>
    <property type="evidence" value="ECO:0007669"/>
    <property type="project" value="UniProtKB-UniRule"/>
</dbReference>
<dbReference type="GO" id="GO:0004823">
    <property type="term" value="F:leucine-tRNA ligase activity"/>
    <property type="evidence" value="ECO:0007669"/>
    <property type="project" value="UniProtKB-UniRule"/>
</dbReference>
<dbReference type="GO" id="GO:0006429">
    <property type="term" value="P:leucyl-tRNA aminoacylation"/>
    <property type="evidence" value="ECO:0007669"/>
    <property type="project" value="UniProtKB-UniRule"/>
</dbReference>
<dbReference type="CDD" id="cd07958">
    <property type="entry name" value="Anticodon_Ia_Leu_BEm"/>
    <property type="match status" value="1"/>
</dbReference>
<dbReference type="CDD" id="cd00812">
    <property type="entry name" value="LeuRS_core"/>
    <property type="match status" value="1"/>
</dbReference>
<dbReference type="FunFam" id="3.40.50.620:FF:000056">
    <property type="entry name" value="Leucine--tRNA ligase"/>
    <property type="match status" value="1"/>
</dbReference>
<dbReference type="FunFam" id="3.40.50.620:FF:000077">
    <property type="entry name" value="Leucine--tRNA ligase"/>
    <property type="match status" value="1"/>
</dbReference>
<dbReference type="FunFam" id="1.10.730.10:FF:000011">
    <property type="entry name" value="Leucine--tRNA ligase chloroplastic/mitochondrial"/>
    <property type="match status" value="1"/>
</dbReference>
<dbReference type="Gene3D" id="3.10.20.590">
    <property type="match status" value="1"/>
</dbReference>
<dbReference type="Gene3D" id="3.40.50.620">
    <property type="entry name" value="HUPs"/>
    <property type="match status" value="2"/>
</dbReference>
<dbReference type="Gene3D" id="1.10.730.10">
    <property type="entry name" value="Isoleucyl-tRNA Synthetase, Domain 1"/>
    <property type="match status" value="1"/>
</dbReference>
<dbReference type="Gene3D" id="3.90.740.10">
    <property type="entry name" value="Valyl/Leucyl/Isoleucyl-tRNA synthetase, editing domain"/>
    <property type="match status" value="1"/>
</dbReference>
<dbReference type="HAMAP" id="MF_00049_B">
    <property type="entry name" value="Leu_tRNA_synth_B"/>
    <property type="match status" value="1"/>
</dbReference>
<dbReference type="InterPro" id="IPR002300">
    <property type="entry name" value="aa-tRNA-synth_Ia"/>
</dbReference>
<dbReference type="InterPro" id="IPR002302">
    <property type="entry name" value="Leu-tRNA-ligase"/>
</dbReference>
<dbReference type="InterPro" id="IPR025709">
    <property type="entry name" value="Leu_tRNA-synth_edit"/>
</dbReference>
<dbReference type="InterPro" id="IPR013155">
    <property type="entry name" value="M/V/L/I-tRNA-synth_anticd-bd"/>
</dbReference>
<dbReference type="InterPro" id="IPR015413">
    <property type="entry name" value="Methionyl/Leucyl_tRNA_Synth"/>
</dbReference>
<dbReference type="InterPro" id="IPR014729">
    <property type="entry name" value="Rossmann-like_a/b/a_fold"/>
</dbReference>
<dbReference type="InterPro" id="IPR009080">
    <property type="entry name" value="tRNAsynth_Ia_anticodon-bd"/>
</dbReference>
<dbReference type="InterPro" id="IPR009008">
    <property type="entry name" value="Val/Leu/Ile-tRNA-synth_edit"/>
</dbReference>
<dbReference type="NCBIfam" id="TIGR00396">
    <property type="entry name" value="leuS_bact"/>
    <property type="match status" value="1"/>
</dbReference>
<dbReference type="PANTHER" id="PTHR43740:SF2">
    <property type="entry name" value="LEUCINE--TRNA LIGASE, MITOCHONDRIAL"/>
    <property type="match status" value="1"/>
</dbReference>
<dbReference type="PANTHER" id="PTHR43740">
    <property type="entry name" value="LEUCYL-TRNA SYNTHETASE"/>
    <property type="match status" value="1"/>
</dbReference>
<dbReference type="Pfam" id="PF08264">
    <property type="entry name" value="Anticodon_1"/>
    <property type="match status" value="1"/>
</dbReference>
<dbReference type="Pfam" id="PF00133">
    <property type="entry name" value="tRNA-synt_1"/>
    <property type="match status" value="1"/>
</dbReference>
<dbReference type="Pfam" id="PF13603">
    <property type="entry name" value="tRNA-synt_1_2"/>
    <property type="match status" value="1"/>
</dbReference>
<dbReference type="Pfam" id="PF09334">
    <property type="entry name" value="tRNA-synt_1g"/>
    <property type="match status" value="1"/>
</dbReference>
<dbReference type="PRINTS" id="PR00985">
    <property type="entry name" value="TRNASYNTHLEU"/>
</dbReference>
<dbReference type="SUPFAM" id="SSF47323">
    <property type="entry name" value="Anticodon-binding domain of a subclass of class I aminoacyl-tRNA synthetases"/>
    <property type="match status" value="1"/>
</dbReference>
<dbReference type="SUPFAM" id="SSF52374">
    <property type="entry name" value="Nucleotidylyl transferase"/>
    <property type="match status" value="1"/>
</dbReference>
<dbReference type="SUPFAM" id="SSF50677">
    <property type="entry name" value="ValRS/IleRS/LeuRS editing domain"/>
    <property type="match status" value="1"/>
</dbReference>
<protein>
    <recommendedName>
        <fullName evidence="1">Leucine--tRNA ligase</fullName>
        <ecNumber evidence="1">6.1.1.4</ecNumber>
    </recommendedName>
    <alternativeName>
        <fullName evidence="1">Leucyl-tRNA synthetase</fullName>
        <shortName evidence="1">LeuRS</shortName>
    </alternativeName>
</protein>
<keyword id="KW-0030">Aminoacyl-tRNA synthetase</keyword>
<keyword id="KW-0067">ATP-binding</keyword>
<keyword id="KW-0963">Cytoplasm</keyword>
<keyword id="KW-0436">Ligase</keyword>
<keyword id="KW-0547">Nucleotide-binding</keyword>
<keyword id="KW-0648">Protein biosynthesis</keyword>
<feature type="chain" id="PRO_1000091302" description="Leucine--tRNA ligase">
    <location>
        <begin position="1"/>
        <end position="805"/>
    </location>
</feature>
<feature type="short sequence motif" description="'HIGH' region">
    <location>
        <begin position="40"/>
        <end position="51"/>
    </location>
</feature>
<feature type="short sequence motif" description="'KMSKS' region">
    <location>
        <begin position="576"/>
        <end position="580"/>
    </location>
</feature>
<feature type="binding site" evidence="1">
    <location>
        <position position="579"/>
    </location>
    <ligand>
        <name>ATP</name>
        <dbReference type="ChEBI" id="CHEBI:30616"/>
    </ligand>
</feature>
<organism>
    <name type="scientific">Chlorobium limicola (strain DSM 245 / NBRC 103803 / 6330)</name>
    <dbReference type="NCBI Taxonomy" id="290315"/>
    <lineage>
        <taxon>Bacteria</taxon>
        <taxon>Pseudomonadati</taxon>
        <taxon>Chlorobiota</taxon>
        <taxon>Chlorobiia</taxon>
        <taxon>Chlorobiales</taxon>
        <taxon>Chlorobiaceae</taxon>
        <taxon>Chlorobium/Pelodictyon group</taxon>
        <taxon>Chlorobium</taxon>
    </lineage>
</organism>
<name>SYL_CHLL2</name>